<organism>
    <name type="scientific">Caenorhabditis elegans</name>
    <dbReference type="NCBI Taxonomy" id="6239"/>
    <lineage>
        <taxon>Eukaryota</taxon>
        <taxon>Metazoa</taxon>
        <taxon>Ecdysozoa</taxon>
        <taxon>Nematoda</taxon>
        <taxon>Chromadorea</taxon>
        <taxon>Rhabditida</taxon>
        <taxon>Rhabditina</taxon>
        <taxon>Rhabditomorpha</taxon>
        <taxon>Rhabditoidea</taxon>
        <taxon>Rhabditidae</taxon>
        <taxon>Peloderinae</taxon>
        <taxon>Caenorhabditis</taxon>
    </lineage>
</organism>
<comment type="function">
    <text>Interconversion of serine and glycine.</text>
</comment>
<comment type="catalytic activity">
    <reaction>
        <text>(6R)-5,10-methylene-5,6,7,8-tetrahydrofolate + glycine + H2O = (6S)-5,6,7,8-tetrahydrofolate + L-serine</text>
        <dbReference type="Rhea" id="RHEA:15481"/>
        <dbReference type="ChEBI" id="CHEBI:15377"/>
        <dbReference type="ChEBI" id="CHEBI:15636"/>
        <dbReference type="ChEBI" id="CHEBI:33384"/>
        <dbReference type="ChEBI" id="CHEBI:57305"/>
        <dbReference type="ChEBI" id="CHEBI:57453"/>
        <dbReference type="EC" id="2.1.2.1"/>
    </reaction>
</comment>
<comment type="cofactor">
    <cofactor evidence="1">
        <name>pyridoxal 5'-phosphate</name>
        <dbReference type="ChEBI" id="CHEBI:597326"/>
    </cofactor>
</comment>
<comment type="pathway">
    <text>One-carbon metabolism; tetrahydrofolate interconversion.</text>
</comment>
<comment type="subunit">
    <text evidence="1">Homotetramer.</text>
</comment>
<comment type="alternative products">
    <event type="alternative splicing"/>
    <isoform>
        <id>P50432-1</id>
        <name>b</name>
        <sequence type="displayed"/>
    </isoform>
    <isoform>
        <id>P50432-2</id>
        <name>a</name>
        <sequence type="described" ref="VSP_006097"/>
    </isoform>
</comment>
<comment type="similarity">
    <text evidence="3">Belongs to the SHMT family.</text>
</comment>
<gene>
    <name type="primary">mel-32</name>
    <name type="synonym">gly-1</name>
    <name type="ORF">C05D11.11</name>
</gene>
<feature type="chain" id="PRO_0000113508" description="Serine hydroxymethyltransferase">
    <location>
        <begin position="1"/>
        <end position="507"/>
    </location>
</feature>
<feature type="modified residue" description="N6-(pyridoxal phosphate)lysine" evidence="1">
    <location>
        <position position="283"/>
    </location>
</feature>
<feature type="splice variant" id="VSP_006097" description="In isoform a." evidence="3">
    <location>
        <begin position="1"/>
        <end position="23"/>
    </location>
</feature>
<feature type="mutagenesis site" description="In t1473; causes recessive maternal effect lethal (Mel) phenotype where homozygotes are viable but offspring display an embryonic lethal phenotype; when associated with F-169." evidence="2">
    <original>A</original>
    <variation>V</variation>
    <location>
        <position position="86"/>
    </location>
</feature>
<feature type="mutagenesis site" description="In t1597; causes recessive maternal effect lethal (Mel) phenotype where homozygotes are viable but offspring display an embryonic lethal phenotype." evidence="2">
    <original>R</original>
    <variation>Q</variation>
    <location>
        <position position="107"/>
    </location>
</feature>
<feature type="mutagenesis site" description="In t1555; causes recessive maternal effect lethal (Mel) phenotype where homozygotes are viable but offspring display an embryonic lethal phenotype." evidence="2">
    <original>R</original>
    <variation>K</variation>
    <location>
        <position position="125"/>
    </location>
</feature>
<feature type="mutagenesis site" description="In t1666; causes recessive maternal effect lethal (Mel) phenotype where homozygotes are viable but offspring display an embryonic lethal phenotype." evidence="2">
    <original>A</original>
    <variation>V</variation>
    <location>
        <position position="126"/>
    </location>
</feature>
<feature type="mutagenesis site" description="In s2518; causes recessive maternal effect lethal (Mel) phenotype where homozygotes are viable but offspring display an embryonic lethal phenotype." evidence="2">
    <original>A</original>
    <variation>V</variation>
    <location>
        <position position="149"/>
    </location>
</feature>
<feature type="mutagenesis site" description="In t1679; causes recessive maternal effect lethal (Mel) phenotype where homozygotes are viable but offspring display an embryonic lethal phenotype." evidence="2">
    <original>G</original>
    <variation>D</variation>
    <location>
        <position position="166"/>
    </location>
</feature>
<feature type="mutagenesis site" description="In t1473; causes recessive maternal effect lethal (Mel) phenotype where homozygotes are viable but offspring display an embryonic lethal phenotype; when associated with V-86." evidence="2">
    <original>L</original>
    <variation>F</variation>
    <location>
        <position position="169"/>
    </location>
</feature>
<feature type="mutagenesis site" description="In t1665; causes recessive maternal effect lethal (Mel) phenotype where homozygotes are viable but offspring display an embryonic lethal phenotype." evidence="2">
    <original>G</original>
    <variation>E</variation>
    <location>
        <position position="172"/>
    </location>
</feature>
<feature type="mutagenesis site" description="In t1552; causes recessive maternal effect lethal (Mel) phenotype where homozygotes are viable but offspring display an embryonic lethal phenotype." evidence="2">
    <original>G</original>
    <variation>E</variation>
    <location>
        <position position="227"/>
    </location>
</feature>
<feature type="mutagenesis site" description="In t1520; causes recessive maternal effect lethal (Mel) phenotype where homozygotes are viable but offspring display an embryonic lethal phenotype." evidence="2">
    <original>S</original>
    <variation>F</variation>
    <location>
        <position position="274"/>
    </location>
</feature>
<feature type="mutagenesis site" description="In t1607; causes recessive maternal effect lethal (Mel) phenotype where homozygotes are viable but offspring display an embryonic lethal phenotype." evidence="2">
    <original>H</original>
    <variation>Y</variation>
    <location>
        <position position="282"/>
    </location>
</feature>
<feature type="mutagenesis site" description="In t1616; causes recessive maternal effect lethal (Mel) phenotype where homozygotes are viable but offspring display an embryonic lethal phenotype." evidence="2">
    <original>A</original>
    <variation>T</variation>
    <location>
        <position position="291"/>
    </location>
</feature>
<feature type="mutagenesis site" description="In t1456; causes recessive maternal effect lethal (Mel) phenotype where homozygotes are viable but offspring display an embryonic lethal phenotype." evidence="2">
    <original>G</original>
    <variation>E</variation>
    <location>
        <position position="336"/>
    </location>
</feature>
<feature type="mutagenesis site" description="In t1576; causes recessive maternal effect lethal (Mel) phenotype where homozygotes are viable but offspring display an embryonic lethal phenotype." evidence="2">
    <original>G</original>
    <variation>R</variation>
    <location>
        <position position="395"/>
    </location>
</feature>
<feature type="mutagenesis site" description="In t1632; causes recessive maternal effect lethal (Mel) phenotype where homozygotes are viable but offspring display an embryonic lethal phenotype." evidence="2">
    <original>G</original>
    <variation>E</variation>
    <location>
        <position position="429"/>
    </location>
</feature>
<proteinExistence type="evidence at protein level"/>
<name>GLYC_CAEEL</name>
<evidence type="ECO:0000250" key="1"/>
<evidence type="ECO:0000269" key="2">
    <source>
    </source>
</evidence>
<evidence type="ECO:0000305" key="3"/>
<reference key="1">
    <citation type="journal article" date="1998" name="Science">
        <title>Genome sequence of the nematode C. elegans: a platform for investigating biology.</title>
        <authorList>
            <consortium name="The C. elegans sequencing consortium"/>
        </authorList>
    </citation>
    <scope>NUCLEOTIDE SEQUENCE [LARGE SCALE GENOMIC DNA]</scope>
    <scope>ALTERNATIVE SPLICING</scope>
    <source>
        <strain>Bristol N2</strain>
    </source>
</reference>
<reference key="2">
    <citation type="journal article" date="1998" name="J. Biol. Chem.">
        <title>Serine hydroxymethyltransferase is maternally essential in Caenorhabditis elegans.</title>
        <authorList>
            <person name="Vatcher G.P."/>
            <person name="Thacker C.M."/>
            <person name="Kaletta T."/>
            <person name="Schnabel H."/>
            <person name="Schnabel R."/>
            <person name="Baillie D.L."/>
        </authorList>
    </citation>
    <scope>MUTAGENESIS OF ALA-86; ARG-107; ARG-125; ALA-126; ALA-149; GLY-166; LEU-169; GLY-172; GLY-227; SER-274; HIS-282; ALA-291; GLY-336; GLY-395 AND GLY-429</scope>
</reference>
<keyword id="KW-0025">Alternative splicing</keyword>
<keyword id="KW-0554">One-carbon metabolism</keyword>
<keyword id="KW-0663">Pyridoxal phosphate</keyword>
<keyword id="KW-1185">Reference proteome</keyword>
<keyword id="KW-0808">Transferase</keyword>
<sequence length="507" mass="55765">MFARIVSRRAATGLFAGASSQCKMADRQVHTPLAKVQRHKYTNNENILVDHVEKVDPEVFDIMKNEKKRQRRGLELIASENFTSKAVMDALGSAMCNKYSEGYPGARYYGGNEFIDQMELLCQKRALEVFGLDPAKWGVNVQPLSGSPANFAVYTAIVGSNGRIMGLDLPDGGHLTHGFFTPARKVSATSEFFQSLPYKVDPTTGLIDYDKLEQNAMLFRPKAIIAGVSCYARHLDYERFRKIATKAGAYLMSDMAHISGLVAAGLIPSPFEYSDVVTTTTHKSLRGPRGALIFYRKGVRSTNAKGVDTLYDLEEKINSAVFPGLQGGPHNHTIAGIAVALRQCLSEDFVQYGEQVLKNAKTLAERMKKHGYALATGGTDNHLLLVDLRPIGVEGARAEHVLDLAHIACNKNTCPGDVSALRPGGIRLGTPALTSRGFQEQDFEKVGDFIHEGVQIAKKYNAEAGKTLKDFKSFTETNEPFKKDVADLAKRVEEFSTKFEIPGNETF</sequence>
<accession>P50432</accession>
<accession>Q95QX8</accession>
<protein>
    <recommendedName>
        <fullName>Serine hydroxymethyltransferase</fullName>
        <shortName>SHMT</shortName>
        <ecNumber>2.1.2.1</ecNumber>
    </recommendedName>
    <alternativeName>
        <fullName>Glycine hydroxymethyltransferase</fullName>
    </alternativeName>
    <alternativeName>
        <fullName>Glycosylation-related protein 1</fullName>
    </alternativeName>
    <alternativeName>
        <fullName>Maternal effect lethal protein 32</fullName>
    </alternativeName>
    <alternativeName>
        <fullName>Serine methylase</fullName>
    </alternativeName>
</protein>
<dbReference type="EC" id="2.1.2.1"/>
<dbReference type="EMBL" id="FO080365">
    <property type="protein sequence ID" value="CCD63201.1"/>
    <property type="molecule type" value="Genomic_DNA"/>
</dbReference>
<dbReference type="EMBL" id="FO080365">
    <property type="protein sequence ID" value="CCD63202.1"/>
    <property type="molecule type" value="Genomic_DNA"/>
</dbReference>
<dbReference type="PIR" id="B88483">
    <property type="entry name" value="B88483"/>
</dbReference>
<dbReference type="RefSeq" id="NP_001379624.1">
    <molecule id="P50432-2"/>
    <property type="nucleotide sequence ID" value="NM_001392122.1"/>
</dbReference>
<dbReference type="RefSeq" id="NP_741197.1">
    <molecule id="P50432-1"/>
    <property type="nucleotide sequence ID" value="NM_171169.6"/>
</dbReference>
<dbReference type="RefSeq" id="NP_741198.1">
    <property type="nucleotide sequence ID" value="NM_171170.4"/>
</dbReference>
<dbReference type="SMR" id="P50432"/>
<dbReference type="BioGRID" id="41133">
    <property type="interactions" value="23"/>
</dbReference>
<dbReference type="DIP" id="DIP-26240N"/>
<dbReference type="FunCoup" id="P50432">
    <property type="interactions" value="1898"/>
</dbReference>
<dbReference type="IntAct" id="P50432">
    <property type="interactions" value="2"/>
</dbReference>
<dbReference type="MINT" id="P50432"/>
<dbReference type="STRING" id="6239.C05D11.11b.2"/>
<dbReference type="iPTMnet" id="P50432"/>
<dbReference type="PaxDb" id="6239-C05D11.11b.1"/>
<dbReference type="PeptideAtlas" id="P50432"/>
<dbReference type="EnsemblMetazoa" id="C05D11.11a.1">
    <molecule id="P50432-2"/>
    <property type="protein sequence ID" value="C05D11.11a.1"/>
    <property type="gene ID" value="WBGene00003214"/>
</dbReference>
<dbReference type="EnsemblMetazoa" id="C05D11.11a.2">
    <molecule id="P50432-2"/>
    <property type="protein sequence ID" value="C05D11.11a.2"/>
    <property type="gene ID" value="WBGene00003214"/>
</dbReference>
<dbReference type="EnsemblMetazoa" id="C05D11.11a.3">
    <molecule id="P50432-2"/>
    <property type="protein sequence ID" value="C05D11.11a.3"/>
    <property type="gene ID" value="WBGene00003214"/>
</dbReference>
<dbReference type="EnsemblMetazoa" id="C05D11.11b.1">
    <molecule id="P50432-1"/>
    <property type="protein sequence ID" value="C05D11.11b.1"/>
    <property type="gene ID" value="WBGene00003214"/>
</dbReference>
<dbReference type="GeneID" id="175915"/>
<dbReference type="KEGG" id="cel:CELE_C05D11.11"/>
<dbReference type="UCSC" id="F44F4.6">
    <molecule id="P50432-1"/>
    <property type="organism name" value="c. elegans"/>
</dbReference>
<dbReference type="AGR" id="WB:WBGene00003214"/>
<dbReference type="CTD" id="175915"/>
<dbReference type="WormBase" id="C05D11.11a">
    <molecule id="P50432-2"/>
    <property type="protein sequence ID" value="CE01130"/>
    <property type="gene ID" value="WBGene00003214"/>
    <property type="gene designation" value="mel-32"/>
</dbReference>
<dbReference type="WormBase" id="C05D11.11b">
    <molecule id="P50432-1"/>
    <property type="protein sequence ID" value="CE29661"/>
    <property type="gene ID" value="WBGene00003214"/>
    <property type="gene designation" value="mel-32"/>
</dbReference>
<dbReference type="eggNOG" id="KOG2467">
    <property type="taxonomic scope" value="Eukaryota"/>
</dbReference>
<dbReference type="GeneTree" id="ENSGT00390000002762"/>
<dbReference type="InParanoid" id="P50432"/>
<dbReference type="OMA" id="CQFANVQ"/>
<dbReference type="OrthoDB" id="10265628at2759"/>
<dbReference type="PhylomeDB" id="P50432"/>
<dbReference type="Reactome" id="R-CEL-196757">
    <property type="pathway name" value="Metabolism of folate and pterines"/>
</dbReference>
<dbReference type="Reactome" id="R-CEL-71262">
    <property type="pathway name" value="Carnitine synthesis"/>
</dbReference>
<dbReference type="UniPathway" id="UPA00193"/>
<dbReference type="PRO" id="PR:P50432"/>
<dbReference type="Proteomes" id="UP000001940">
    <property type="component" value="Chromosome III"/>
</dbReference>
<dbReference type="Bgee" id="WBGene00003214">
    <property type="expression patterns" value="Expressed in adult organism and 4 other cell types or tissues"/>
</dbReference>
<dbReference type="GO" id="GO:0005737">
    <property type="term" value="C:cytoplasm"/>
    <property type="evidence" value="ECO:0000318"/>
    <property type="project" value="GO_Central"/>
</dbReference>
<dbReference type="GO" id="GO:0005739">
    <property type="term" value="C:mitochondrion"/>
    <property type="evidence" value="ECO:0007005"/>
    <property type="project" value="WormBase"/>
</dbReference>
<dbReference type="GO" id="GO:0005634">
    <property type="term" value="C:nucleus"/>
    <property type="evidence" value="ECO:0000318"/>
    <property type="project" value="GO_Central"/>
</dbReference>
<dbReference type="GO" id="GO:0004372">
    <property type="term" value="F:glycine hydroxymethyltransferase activity"/>
    <property type="evidence" value="ECO:0000318"/>
    <property type="project" value="GO_Central"/>
</dbReference>
<dbReference type="GO" id="GO:0030170">
    <property type="term" value="F:pyridoxal phosphate binding"/>
    <property type="evidence" value="ECO:0000318"/>
    <property type="project" value="GO_Central"/>
</dbReference>
<dbReference type="GO" id="GO:0009792">
    <property type="term" value="P:embryo development ending in birth or egg hatching"/>
    <property type="evidence" value="ECO:0000315"/>
    <property type="project" value="WormBase"/>
</dbReference>
<dbReference type="GO" id="GO:0019264">
    <property type="term" value="P:glycine biosynthetic process from serine"/>
    <property type="evidence" value="ECO:0000318"/>
    <property type="project" value="GO_Central"/>
</dbReference>
<dbReference type="GO" id="GO:0035999">
    <property type="term" value="P:tetrahydrofolate interconversion"/>
    <property type="evidence" value="ECO:0007669"/>
    <property type="project" value="UniProtKB-UniPathway"/>
</dbReference>
<dbReference type="GO" id="GO:0046653">
    <property type="term" value="P:tetrahydrofolate metabolic process"/>
    <property type="evidence" value="ECO:0000318"/>
    <property type="project" value="GO_Central"/>
</dbReference>
<dbReference type="CDD" id="cd00378">
    <property type="entry name" value="SHMT"/>
    <property type="match status" value="1"/>
</dbReference>
<dbReference type="FunFam" id="3.40.640.10:FF:000097">
    <property type="entry name" value="Serine hydroxymethyltransferase"/>
    <property type="match status" value="1"/>
</dbReference>
<dbReference type="Gene3D" id="3.90.1150.10">
    <property type="entry name" value="Aspartate Aminotransferase, domain 1"/>
    <property type="match status" value="1"/>
</dbReference>
<dbReference type="Gene3D" id="3.40.640.10">
    <property type="entry name" value="Type I PLP-dependent aspartate aminotransferase-like (Major domain)"/>
    <property type="match status" value="1"/>
</dbReference>
<dbReference type="HAMAP" id="MF_00051">
    <property type="entry name" value="SHMT"/>
    <property type="match status" value="1"/>
</dbReference>
<dbReference type="InterPro" id="IPR015424">
    <property type="entry name" value="PyrdxlP-dep_Trfase"/>
</dbReference>
<dbReference type="InterPro" id="IPR015421">
    <property type="entry name" value="PyrdxlP-dep_Trfase_major"/>
</dbReference>
<dbReference type="InterPro" id="IPR015422">
    <property type="entry name" value="PyrdxlP-dep_Trfase_small"/>
</dbReference>
<dbReference type="InterPro" id="IPR001085">
    <property type="entry name" value="Ser_HO-MeTrfase"/>
</dbReference>
<dbReference type="InterPro" id="IPR049943">
    <property type="entry name" value="Ser_HO-MeTrfase-like"/>
</dbReference>
<dbReference type="InterPro" id="IPR019798">
    <property type="entry name" value="Ser_HO-MeTrfase_PLP_BS"/>
</dbReference>
<dbReference type="InterPro" id="IPR039429">
    <property type="entry name" value="SHMT-like_dom"/>
</dbReference>
<dbReference type="NCBIfam" id="NF000586">
    <property type="entry name" value="PRK00011.1"/>
    <property type="match status" value="1"/>
</dbReference>
<dbReference type="PANTHER" id="PTHR11680">
    <property type="entry name" value="SERINE HYDROXYMETHYLTRANSFERASE"/>
    <property type="match status" value="1"/>
</dbReference>
<dbReference type="PANTHER" id="PTHR11680:SF59">
    <property type="entry name" value="SERINE HYDROXYMETHYLTRANSFERASE, CYTOSOLIC"/>
    <property type="match status" value="1"/>
</dbReference>
<dbReference type="Pfam" id="PF00464">
    <property type="entry name" value="SHMT"/>
    <property type="match status" value="1"/>
</dbReference>
<dbReference type="PIRSF" id="PIRSF000412">
    <property type="entry name" value="SHMT"/>
    <property type="match status" value="1"/>
</dbReference>
<dbReference type="SUPFAM" id="SSF53383">
    <property type="entry name" value="PLP-dependent transferases"/>
    <property type="match status" value="1"/>
</dbReference>
<dbReference type="PROSITE" id="PS00096">
    <property type="entry name" value="SHMT"/>
    <property type="match status" value="1"/>
</dbReference>